<accession>Q5UNU2</accession>
<dbReference type="EC" id="3.-.-.-"/>
<dbReference type="EMBL" id="AY653733">
    <property type="protein sequence ID" value="AAV50948.1"/>
    <property type="molecule type" value="Genomic_DNA"/>
</dbReference>
<dbReference type="SMR" id="Q5UNU2"/>
<dbReference type="KEGG" id="vg:9925338"/>
<dbReference type="OrthoDB" id="7326at10239"/>
<dbReference type="Proteomes" id="UP000001134">
    <property type="component" value="Genome"/>
</dbReference>
<dbReference type="GO" id="GO:0044423">
    <property type="term" value="C:virion component"/>
    <property type="evidence" value="ECO:0007669"/>
    <property type="project" value="UniProtKB-KW"/>
</dbReference>
<dbReference type="GO" id="GO:0004519">
    <property type="term" value="F:endonuclease activity"/>
    <property type="evidence" value="ECO:0007669"/>
    <property type="project" value="UniProtKB-KW"/>
</dbReference>
<dbReference type="GO" id="GO:0006289">
    <property type="term" value="P:nucleotide-excision repair"/>
    <property type="evidence" value="ECO:0007669"/>
    <property type="project" value="InterPro"/>
</dbReference>
<dbReference type="GO" id="GO:0009411">
    <property type="term" value="P:response to UV"/>
    <property type="evidence" value="ECO:0007669"/>
    <property type="project" value="InterPro"/>
</dbReference>
<dbReference type="Gene3D" id="3.20.20.150">
    <property type="entry name" value="Divalent-metal-dependent TIM barrel enzymes"/>
    <property type="match status" value="1"/>
</dbReference>
<dbReference type="InterPro" id="IPR004601">
    <property type="entry name" value="UvdE"/>
</dbReference>
<dbReference type="InterPro" id="IPR036237">
    <property type="entry name" value="Xyl_isomerase-like_sf"/>
</dbReference>
<dbReference type="NCBIfam" id="TIGR00629">
    <property type="entry name" value="uvde"/>
    <property type="match status" value="1"/>
</dbReference>
<dbReference type="PANTHER" id="PTHR31290">
    <property type="entry name" value="UV-DAMAGE ENDONUCLEASE"/>
    <property type="match status" value="1"/>
</dbReference>
<dbReference type="PANTHER" id="PTHR31290:SF5">
    <property type="entry name" value="UV-DAMAGE ENDONUCLEASE"/>
    <property type="match status" value="1"/>
</dbReference>
<dbReference type="Pfam" id="PF03851">
    <property type="entry name" value="UvdE"/>
    <property type="match status" value="1"/>
</dbReference>
<dbReference type="SUPFAM" id="SSF51658">
    <property type="entry name" value="Xylose isomerase-like"/>
    <property type="match status" value="1"/>
</dbReference>
<name>UVE1H_MIMIV</name>
<keyword id="KW-0227">DNA damage</keyword>
<keyword id="KW-0228">DNA excision</keyword>
<keyword id="KW-0234">DNA repair</keyword>
<keyword id="KW-0255">Endonuclease</keyword>
<keyword id="KW-0378">Hydrolase</keyword>
<keyword id="KW-0540">Nuclease</keyword>
<keyword id="KW-1185">Reference proteome</keyword>
<keyword id="KW-0946">Virion</keyword>
<sequence length="330" mass="38547">MNQNLIRLGYACLNSDLRNYDIFTSRKPILKTVKSQGFDYVKETIIRNLRDLFTIIIYNESHGIRFFRISSSIFPHLGNPLLPDSDYDLSFAKNLIKEIGSYAKINGHRLTMHPGQFVQLGSNNEEVVRRSFVELQNHATLLEMLGYSSLDSSVLIVHGGGTFGDKETTLERWKSNFRKLPENIRQLICLENDENSYGILDLLPVCEELNVPFCLDIFHNRVSKNRIPLTKKLMKRIINTWKRRNMTPKMHFSNQEPGLRRGAHSKTINELPEYLFRIPDMFQTSLDIILEVKDKEKSVLKMYFKYFDIETNIDGRNNFILKKDYSLKKN</sequence>
<comment type="function">
    <text evidence="1">Endonuclease for the repair of UV-irradiated DNA.</text>
</comment>
<comment type="subcellular location">
    <subcellularLocation>
        <location evidence="2">Virion</location>
    </subcellularLocation>
</comment>
<comment type="similarity">
    <text evidence="3">Belongs to the uve1/UvsE family.</text>
</comment>
<proteinExistence type="evidence at protein level"/>
<evidence type="ECO:0000250" key="1"/>
<evidence type="ECO:0000269" key="2">
    <source>
    </source>
</evidence>
<evidence type="ECO:0000305" key="3"/>
<organism>
    <name type="scientific">Acanthamoeba polyphaga mimivirus</name>
    <name type="common">APMV</name>
    <dbReference type="NCBI Taxonomy" id="212035"/>
    <lineage>
        <taxon>Viruses</taxon>
        <taxon>Varidnaviria</taxon>
        <taxon>Bamfordvirae</taxon>
        <taxon>Nucleocytoviricota</taxon>
        <taxon>Megaviricetes</taxon>
        <taxon>Imitervirales</taxon>
        <taxon>Mimiviridae</taxon>
        <taxon>Megamimivirinae</taxon>
        <taxon>Mimivirus</taxon>
        <taxon>Mimivirus bradfordmassiliense</taxon>
    </lineage>
</organism>
<gene>
    <name type="ordered locus">MIMI_L687</name>
</gene>
<organismHost>
    <name type="scientific">Acanthamoeba polyphaga</name>
    <name type="common">Amoeba</name>
    <dbReference type="NCBI Taxonomy" id="5757"/>
</organismHost>
<reference key="1">
    <citation type="journal article" date="2004" name="Science">
        <title>The 1.2-megabase genome sequence of Mimivirus.</title>
        <authorList>
            <person name="Raoult D."/>
            <person name="Audic S."/>
            <person name="Robert C."/>
            <person name="Abergel C."/>
            <person name="Renesto P."/>
            <person name="Ogata H."/>
            <person name="La Scola B."/>
            <person name="Susan M."/>
            <person name="Claverie J.-M."/>
        </authorList>
    </citation>
    <scope>NUCLEOTIDE SEQUENCE [LARGE SCALE GENOMIC DNA]</scope>
    <source>
        <strain>Rowbotham-Bradford</strain>
    </source>
</reference>
<reference key="2">
    <citation type="journal article" date="2006" name="J. Virol.">
        <title>Mimivirus giant particles incorporate a large fraction of anonymous and unique gene products.</title>
        <authorList>
            <person name="Renesto P."/>
            <person name="Abergel C."/>
            <person name="Decloquement P."/>
            <person name="Moinier D."/>
            <person name="Azza S."/>
            <person name="Ogata H."/>
            <person name="Fourquet P."/>
            <person name="Gorvel J.-P."/>
            <person name="Claverie J.-M."/>
            <person name="Raoult D."/>
        </authorList>
    </citation>
    <scope>IDENTIFICATION BY MASS SPECTROMETRY [LARGE SCALE ANALYSIS]</scope>
    <scope>SUBCELLULAR LOCATION</scope>
</reference>
<feature type="chain" id="PRO_0000309193" description="Putative UV-damage endonuclease">
    <location>
        <begin position="1"/>
        <end position="330"/>
    </location>
</feature>
<protein>
    <recommendedName>
        <fullName>Putative UV-damage endonuclease</fullName>
        <ecNumber>3.-.-.-</ecNumber>
    </recommendedName>
</protein>